<feature type="chain" id="PRO_0000136131" description="Histidine--tRNA ligase">
    <location>
        <begin position="1"/>
        <end position="408"/>
    </location>
</feature>
<gene>
    <name evidence="1" type="primary">hisS</name>
    <name type="ordered locus">Cj0765c</name>
</gene>
<reference key="1">
    <citation type="journal article" date="2000" name="Nature">
        <title>The genome sequence of the food-borne pathogen Campylobacter jejuni reveals hypervariable sequences.</title>
        <authorList>
            <person name="Parkhill J."/>
            <person name="Wren B.W."/>
            <person name="Mungall K.L."/>
            <person name="Ketley J.M."/>
            <person name="Churcher C.M."/>
            <person name="Basham D."/>
            <person name="Chillingworth T."/>
            <person name="Davies R.M."/>
            <person name="Feltwell T."/>
            <person name="Holroyd S."/>
            <person name="Jagels K."/>
            <person name="Karlyshev A.V."/>
            <person name="Moule S."/>
            <person name="Pallen M.J."/>
            <person name="Penn C.W."/>
            <person name="Quail M.A."/>
            <person name="Rajandream M.A."/>
            <person name="Rutherford K.M."/>
            <person name="van Vliet A.H.M."/>
            <person name="Whitehead S."/>
            <person name="Barrell B.G."/>
        </authorList>
    </citation>
    <scope>NUCLEOTIDE SEQUENCE [LARGE SCALE GENOMIC DNA]</scope>
    <source>
        <strain>ATCC 700819 / NCTC 11168</strain>
    </source>
</reference>
<sequence length="408" mass="47158">MINALKGMKDLLDKDAYYYEKVIKICEEVAKNYGFTFINTPHLELCTLFKRSVGESSDIVGKEMYEFIDKGENHVCMRPEGTAGVVRAYIEKKLDKNTSVKRWFYYGSMFRYERPQKGRLREFHQFGVESLGIPNVYEDASIILMLVEIFSRLGIDFKLQLNSLGCSQCLPKYRDRLVEFLDSKEGFCEDCLRRKNLNPIRVLDCKNEHCQNLLENAPLLINNLCTSCQKDFETLQQILKDNGVKFELDSKLVRGLDYYSKTAFEFISDEIGAKAAIAGGGRYDRLIEYLGGKSGYGIGFAMGIERIITILEQKEEKIQREGIYLCAMDEIYIQKLLHIATNLRKEYKVLLSYEARKLAKHLENADKNNTEIFLCMGENEAQNESLFYKNLAKKEEKMIKISDLKKVL</sequence>
<evidence type="ECO:0000255" key="1">
    <source>
        <dbReference type="HAMAP-Rule" id="MF_00127"/>
    </source>
</evidence>
<protein>
    <recommendedName>
        <fullName evidence="1">Histidine--tRNA ligase</fullName>
        <ecNumber evidence="1">6.1.1.21</ecNumber>
    </recommendedName>
    <alternativeName>
        <fullName evidence="1">Histidyl-tRNA synthetase</fullName>
        <shortName evidence="1">HisRS</shortName>
    </alternativeName>
</protein>
<organism>
    <name type="scientific">Campylobacter jejuni subsp. jejuni serotype O:2 (strain ATCC 700819 / NCTC 11168)</name>
    <dbReference type="NCBI Taxonomy" id="192222"/>
    <lineage>
        <taxon>Bacteria</taxon>
        <taxon>Pseudomonadati</taxon>
        <taxon>Campylobacterota</taxon>
        <taxon>Epsilonproteobacteria</taxon>
        <taxon>Campylobacterales</taxon>
        <taxon>Campylobacteraceae</taxon>
        <taxon>Campylobacter</taxon>
    </lineage>
</organism>
<proteinExistence type="inferred from homology"/>
<comment type="catalytic activity">
    <reaction evidence="1">
        <text>tRNA(His) + L-histidine + ATP = L-histidyl-tRNA(His) + AMP + diphosphate + H(+)</text>
        <dbReference type="Rhea" id="RHEA:17313"/>
        <dbReference type="Rhea" id="RHEA-COMP:9665"/>
        <dbReference type="Rhea" id="RHEA-COMP:9689"/>
        <dbReference type="ChEBI" id="CHEBI:15378"/>
        <dbReference type="ChEBI" id="CHEBI:30616"/>
        <dbReference type="ChEBI" id="CHEBI:33019"/>
        <dbReference type="ChEBI" id="CHEBI:57595"/>
        <dbReference type="ChEBI" id="CHEBI:78442"/>
        <dbReference type="ChEBI" id="CHEBI:78527"/>
        <dbReference type="ChEBI" id="CHEBI:456215"/>
        <dbReference type="EC" id="6.1.1.21"/>
    </reaction>
</comment>
<comment type="subunit">
    <text evidence="1">Homodimer.</text>
</comment>
<comment type="subcellular location">
    <subcellularLocation>
        <location evidence="1">Cytoplasm</location>
    </subcellularLocation>
</comment>
<comment type="similarity">
    <text evidence="1">Belongs to the class-II aminoacyl-tRNA synthetase family.</text>
</comment>
<keyword id="KW-0030">Aminoacyl-tRNA synthetase</keyword>
<keyword id="KW-0067">ATP-binding</keyword>
<keyword id="KW-0963">Cytoplasm</keyword>
<keyword id="KW-0436">Ligase</keyword>
<keyword id="KW-0547">Nucleotide-binding</keyword>
<keyword id="KW-0648">Protein biosynthesis</keyword>
<keyword id="KW-1185">Reference proteome</keyword>
<name>SYH_CAMJE</name>
<accession>Q9PPF4</accession>
<accession>Q0PAC5</accession>
<dbReference type="EC" id="6.1.1.21" evidence="1"/>
<dbReference type="EMBL" id="AL111168">
    <property type="protein sequence ID" value="CAL34893.1"/>
    <property type="molecule type" value="Genomic_DNA"/>
</dbReference>
<dbReference type="PIR" id="E81347">
    <property type="entry name" value="E81347"/>
</dbReference>
<dbReference type="RefSeq" id="WP_002852541.1">
    <property type="nucleotide sequence ID" value="NZ_SZUC01000001.1"/>
</dbReference>
<dbReference type="RefSeq" id="YP_002344172.1">
    <property type="nucleotide sequence ID" value="NC_002163.1"/>
</dbReference>
<dbReference type="SMR" id="Q9PPF4"/>
<dbReference type="IntAct" id="Q9PPF4">
    <property type="interactions" value="32"/>
</dbReference>
<dbReference type="STRING" id="192222.Cj0765c"/>
<dbReference type="PaxDb" id="192222-Cj0765c"/>
<dbReference type="EnsemblBacteria" id="CAL34893">
    <property type="protein sequence ID" value="CAL34893"/>
    <property type="gene ID" value="Cj0765c"/>
</dbReference>
<dbReference type="GeneID" id="905075"/>
<dbReference type="KEGG" id="cje:Cj0765c"/>
<dbReference type="PATRIC" id="fig|192222.6.peg.753"/>
<dbReference type="eggNOG" id="COG0124">
    <property type="taxonomic scope" value="Bacteria"/>
</dbReference>
<dbReference type="HOGENOM" id="CLU_025113_1_1_7"/>
<dbReference type="OrthoDB" id="9800814at2"/>
<dbReference type="Proteomes" id="UP000000799">
    <property type="component" value="Chromosome"/>
</dbReference>
<dbReference type="GO" id="GO:0005737">
    <property type="term" value="C:cytoplasm"/>
    <property type="evidence" value="ECO:0007669"/>
    <property type="project" value="UniProtKB-SubCell"/>
</dbReference>
<dbReference type="GO" id="GO:0005524">
    <property type="term" value="F:ATP binding"/>
    <property type="evidence" value="ECO:0007669"/>
    <property type="project" value="UniProtKB-UniRule"/>
</dbReference>
<dbReference type="GO" id="GO:0004821">
    <property type="term" value="F:histidine-tRNA ligase activity"/>
    <property type="evidence" value="ECO:0007669"/>
    <property type="project" value="UniProtKB-UniRule"/>
</dbReference>
<dbReference type="GO" id="GO:0006427">
    <property type="term" value="P:histidyl-tRNA aminoacylation"/>
    <property type="evidence" value="ECO:0007669"/>
    <property type="project" value="UniProtKB-UniRule"/>
</dbReference>
<dbReference type="CDD" id="cd00773">
    <property type="entry name" value="HisRS-like_core"/>
    <property type="match status" value="1"/>
</dbReference>
<dbReference type="Gene3D" id="3.40.50.800">
    <property type="entry name" value="Anticodon-binding domain"/>
    <property type="match status" value="1"/>
</dbReference>
<dbReference type="Gene3D" id="3.30.930.10">
    <property type="entry name" value="Bira Bifunctional Protein, Domain 2"/>
    <property type="match status" value="1"/>
</dbReference>
<dbReference type="HAMAP" id="MF_00127">
    <property type="entry name" value="His_tRNA_synth"/>
    <property type="match status" value="1"/>
</dbReference>
<dbReference type="InterPro" id="IPR006195">
    <property type="entry name" value="aa-tRNA-synth_II"/>
</dbReference>
<dbReference type="InterPro" id="IPR045864">
    <property type="entry name" value="aa-tRNA-synth_II/BPL/LPL"/>
</dbReference>
<dbReference type="InterPro" id="IPR004154">
    <property type="entry name" value="Anticodon-bd"/>
</dbReference>
<dbReference type="InterPro" id="IPR036621">
    <property type="entry name" value="Anticodon-bd_dom_sf"/>
</dbReference>
<dbReference type="InterPro" id="IPR015807">
    <property type="entry name" value="His-tRNA-ligase"/>
</dbReference>
<dbReference type="InterPro" id="IPR041715">
    <property type="entry name" value="HisRS-like_core"/>
</dbReference>
<dbReference type="InterPro" id="IPR004516">
    <property type="entry name" value="HisRS/HisZ"/>
</dbReference>
<dbReference type="NCBIfam" id="TIGR00442">
    <property type="entry name" value="hisS"/>
    <property type="match status" value="1"/>
</dbReference>
<dbReference type="PANTHER" id="PTHR43707:SF1">
    <property type="entry name" value="HISTIDINE--TRNA LIGASE, MITOCHONDRIAL-RELATED"/>
    <property type="match status" value="1"/>
</dbReference>
<dbReference type="PANTHER" id="PTHR43707">
    <property type="entry name" value="HISTIDYL-TRNA SYNTHETASE"/>
    <property type="match status" value="1"/>
</dbReference>
<dbReference type="Pfam" id="PF03129">
    <property type="entry name" value="HGTP_anticodon"/>
    <property type="match status" value="1"/>
</dbReference>
<dbReference type="Pfam" id="PF13393">
    <property type="entry name" value="tRNA-synt_His"/>
    <property type="match status" value="1"/>
</dbReference>
<dbReference type="PIRSF" id="PIRSF001549">
    <property type="entry name" value="His-tRNA_synth"/>
    <property type="match status" value="1"/>
</dbReference>
<dbReference type="SUPFAM" id="SSF52954">
    <property type="entry name" value="Class II aaRS ABD-related"/>
    <property type="match status" value="1"/>
</dbReference>
<dbReference type="SUPFAM" id="SSF55681">
    <property type="entry name" value="Class II aaRS and biotin synthetases"/>
    <property type="match status" value="1"/>
</dbReference>
<dbReference type="PROSITE" id="PS50862">
    <property type="entry name" value="AA_TRNA_LIGASE_II"/>
    <property type="match status" value="1"/>
</dbReference>